<accession>A1SR31</accession>
<dbReference type="EC" id="2.7.7.87" evidence="1"/>
<dbReference type="EMBL" id="CP000510">
    <property type="protein sequence ID" value="ABM01946.1"/>
    <property type="molecule type" value="Genomic_DNA"/>
</dbReference>
<dbReference type="SMR" id="A1SR31"/>
<dbReference type="STRING" id="357804.Ping_0072"/>
<dbReference type="KEGG" id="pin:Ping_0072"/>
<dbReference type="eggNOG" id="COG0009">
    <property type="taxonomic scope" value="Bacteria"/>
</dbReference>
<dbReference type="HOGENOM" id="CLU_031397_6_0_6"/>
<dbReference type="OrthoDB" id="9814580at2"/>
<dbReference type="Proteomes" id="UP000000639">
    <property type="component" value="Chromosome"/>
</dbReference>
<dbReference type="GO" id="GO:0005737">
    <property type="term" value="C:cytoplasm"/>
    <property type="evidence" value="ECO:0007669"/>
    <property type="project" value="UniProtKB-SubCell"/>
</dbReference>
<dbReference type="GO" id="GO:0005524">
    <property type="term" value="F:ATP binding"/>
    <property type="evidence" value="ECO:0007669"/>
    <property type="project" value="UniProtKB-UniRule"/>
</dbReference>
<dbReference type="GO" id="GO:0003725">
    <property type="term" value="F:double-stranded RNA binding"/>
    <property type="evidence" value="ECO:0007669"/>
    <property type="project" value="InterPro"/>
</dbReference>
<dbReference type="GO" id="GO:0061710">
    <property type="term" value="F:L-threonylcarbamoyladenylate synthase"/>
    <property type="evidence" value="ECO:0007669"/>
    <property type="project" value="UniProtKB-EC"/>
</dbReference>
<dbReference type="GO" id="GO:0000049">
    <property type="term" value="F:tRNA binding"/>
    <property type="evidence" value="ECO:0007669"/>
    <property type="project" value="TreeGrafter"/>
</dbReference>
<dbReference type="GO" id="GO:0006450">
    <property type="term" value="P:regulation of translational fidelity"/>
    <property type="evidence" value="ECO:0007669"/>
    <property type="project" value="TreeGrafter"/>
</dbReference>
<dbReference type="GO" id="GO:0002949">
    <property type="term" value="P:tRNA threonylcarbamoyladenosine modification"/>
    <property type="evidence" value="ECO:0007669"/>
    <property type="project" value="UniProtKB-UniRule"/>
</dbReference>
<dbReference type="FunFam" id="3.90.870.10:FF:000004">
    <property type="entry name" value="Threonylcarbamoyl-AMP synthase"/>
    <property type="match status" value="1"/>
</dbReference>
<dbReference type="Gene3D" id="3.90.870.10">
    <property type="entry name" value="DHBP synthase"/>
    <property type="match status" value="1"/>
</dbReference>
<dbReference type="HAMAP" id="MF_01852">
    <property type="entry name" value="TsaC"/>
    <property type="match status" value="1"/>
</dbReference>
<dbReference type="InterPro" id="IPR017945">
    <property type="entry name" value="DHBP_synth_RibB-like_a/b_dom"/>
</dbReference>
<dbReference type="InterPro" id="IPR006070">
    <property type="entry name" value="Sua5-like_dom"/>
</dbReference>
<dbReference type="InterPro" id="IPR023535">
    <property type="entry name" value="TC-AMP_synthase"/>
</dbReference>
<dbReference type="InterPro" id="IPR050156">
    <property type="entry name" value="TC-AMP_synthase_SUA5"/>
</dbReference>
<dbReference type="NCBIfam" id="TIGR00057">
    <property type="entry name" value="L-threonylcarbamoyladenylate synthase"/>
    <property type="match status" value="1"/>
</dbReference>
<dbReference type="PANTHER" id="PTHR17490">
    <property type="entry name" value="SUA5"/>
    <property type="match status" value="1"/>
</dbReference>
<dbReference type="PANTHER" id="PTHR17490:SF18">
    <property type="entry name" value="THREONYLCARBAMOYL-AMP SYNTHASE"/>
    <property type="match status" value="1"/>
</dbReference>
<dbReference type="Pfam" id="PF01300">
    <property type="entry name" value="Sua5_yciO_yrdC"/>
    <property type="match status" value="1"/>
</dbReference>
<dbReference type="SUPFAM" id="SSF55821">
    <property type="entry name" value="YrdC/RibB"/>
    <property type="match status" value="1"/>
</dbReference>
<dbReference type="PROSITE" id="PS51163">
    <property type="entry name" value="YRDC"/>
    <property type="match status" value="1"/>
</dbReference>
<name>TSAC_PSYIN</name>
<protein>
    <recommendedName>
        <fullName evidence="1">Threonylcarbamoyl-AMP synthase</fullName>
        <shortName evidence="1">TC-AMP synthase</shortName>
        <ecNumber evidence="1">2.7.7.87</ecNumber>
    </recommendedName>
    <alternativeName>
        <fullName evidence="1">L-threonylcarbamoyladenylate synthase</fullName>
    </alternativeName>
    <alternativeName>
        <fullName evidence="1">t(6)A37 threonylcarbamoyladenosine biosynthesis protein TsaC</fullName>
    </alternativeName>
    <alternativeName>
        <fullName evidence="1">tRNA threonylcarbamoyladenosine biosynthesis protein TsaC</fullName>
    </alternativeName>
</protein>
<comment type="function">
    <text evidence="1">Required for the formation of a threonylcarbamoyl group on adenosine at position 37 (t(6)A37) in tRNAs that read codons beginning with adenine. Catalyzes the conversion of L-threonine, HCO(3)(-)/CO(2) and ATP to give threonylcarbamoyl-AMP (TC-AMP) as the acyladenylate intermediate, with the release of diphosphate.</text>
</comment>
<comment type="catalytic activity">
    <reaction evidence="1">
        <text>L-threonine + hydrogencarbonate + ATP = L-threonylcarbamoyladenylate + diphosphate + H2O</text>
        <dbReference type="Rhea" id="RHEA:36407"/>
        <dbReference type="ChEBI" id="CHEBI:15377"/>
        <dbReference type="ChEBI" id="CHEBI:17544"/>
        <dbReference type="ChEBI" id="CHEBI:30616"/>
        <dbReference type="ChEBI" id="CHEBI:33019"/>
        <dbReference type="ChEBI" id="CHEBI:57926"/>
        <dbReference type="ChEBI" id="CHEBI:73682"/>
        <dbReference type="EC" id="2.7.7.87"/>
    </reaction>
</comment>
<comment type="subcellular location">
    <subcellularLocation>
        <location evidence="1">Cytoplasm</location>
    </subcellularLocation>
</comment>
<comment type="similarity">
    <text evidence="1">Belongs to the SUA5 family. TsaC subfamily.</text>
</comment>
<proteinExistence type="inferred from homology"/>
<keyword id="KW-0067">ATP-binding</keyword>
<keyword id="KW-0963">Cytoplasm</keyword>
<keyword id="KW-0547">Nucleotide-binding</keyword>
<keyword id="KW-0548">Nucleotidyltransferase</keyword>
<keyword id="KW-1185">Reference proteome</keyword>
<keyword id="KW-0808">Transferase</keyword>
<keyword id="KW-0819">tRNA processing</keyword>
<organism>
    <name type="scientific">Psychromonas ingrahamii (strain DSM 17664 / CCUG 51855 / 37)</name>
    <dbReference type="NCBI Taxonomy" id="357804"/>
    <lineage>
        <taxon>Bacteria</taxon>
        <taxon>Pseudomonadati</taxon>
        <taxon>Pseudomonadota</taxon>
        <taxon>Gammaproteobacteria</taxon>
        <taxon>Alteromonadales</taxon>
        <taxon>Psychromonadaceae</taxon>
        <taxon>Psychromonas</taxon>
    </lineage>
</organism>
<evidence type="ECO:0000255" key="1">
    <source>
        <dbReference type="HAMAP-Rule" id="MF_01852"/>
    </source>
</evidence>
<sequence length="191" mass="20772">MLLLLKQSELNDALKILKSQGVIAYPTESVFGLGCDPDCEAAIQKILLLKQRPAYKGLILIAASIEQLEKYADFSLLTAAQLTVIKKTWPGPITWIVPSQKNLSKLISGDFESVAVRVTAHPIVRQICLAFDKPIISTSANLSSLEAALSSQQVNKMFKSNTLLNLVIDAPVSGLSTPTQIFHASTGKRLR</sequence>
<gene>
    <name evidence="1" type="primary">tsaC</name>
    <name type="synonym">rimN</name>
    <name type="ordered locus">Ping_0072</name>
</gene>
<reference key="1">
    <citation type="journal article" date="2008" name="BMC Genomics">
        <title>Genomics of an extreme psychrophile, Psychromonas ingrahamii.</title>
        <authorList>
            <person name="Riley M."/>
            <person name="Staley J.T."/>
            <person name="Danchin A."/>
            <person name="Wang T.Z."/>
            <person name="Brettin T.S."/>
            <person name="Hauser L.J."/>
            <person name="Land M.L."/>
            <person name="Thompson L.S."/>
        </authorList>
    </citation>
    <scope>NUCLEOTIDE SEQUENCE [LARGE SCALE GENOMIC DNA]</scope>
    <source>
        <strain>DSM 17664 / CCUG 51855 / 37</strain>
    </source>
</reference>
<feature type="chain" id="PRO_0000352965" description="Threonylcarbamoyl-AMP synthase">
    <location>
        <begin position="1"/>
        <end position="191"/>
    </location>
</feature>
<feature type="domain" description="YrdC-like" evidence="1">
    <location>
        <begin position="7"/>
        <end position="191"/>
    </location>
</feature>